<comment type="similarity">
    <text evidence="1">Belongs to the CinA family.</text>
</comment>
<organism>
    <name type="scientific">Lactiplantibacillus plantarum (strain ATCC BAA-793 / NCIMB 8826 / WCFS1)</name>
    <name type="common">Lactobacillus plantarum</name>
    <dbReference type="NCBI Taxonomy" id="220668"/>
    <lineage>
        <taxon>Bacteria</taxon>
        <taxon>Bacillati</taxon>
        <taxon>Bacillota</taxon>
        <taxon>Bacilli</taxon>
        <taxon>Lactobacillales</taxon>
        <taxon>Lactobacillaceae</taxon>
        <taxon>Lactiplantibacillus</taxon>
    </lineage>
</organism>
<evidence type="ECO:0000255" key="1">
    <source>
        <dbReference type="HAMAP-Rule" id="MF_00226"/>
    </source>
</evidence>
<accession>Q88UZ3</accession>
<accession>F9UQL3</accession>
<protein>
    <recommendedName>
        <fullName evidence="1">Putative competence-damage inducible protein</fullName>
    </recommendedName>
</protein>
<reference key="1">
    <citation type="journal article" date="2003" name="Proc. Natl. Acad. Sci. U.S.A.">
        <title>Complete genome sequence of Lactobacillus plantarum WCFS1.</title>
        <authorList>
            <person name="Kleerebezem M."/>
            <person name="Boekhorst J."/>
            <person name="van Kranenburg R."/>
            <person name="Molenaar D."/>
            <person name="Kuipers O.P."/>
            <person name="Leer R."/>
            <person name="Tarchini R."/>
            <person name="Peters S.A."/>
            <person name="Sandbrink H.M."/>
            <person name="Fiers M.W.E.J."/>
            <person name="Stiekema W."/>
            <person name="Klein Lankhorst R.M."/>
            <person name="Bron P.A."/>
            <person name="Hoffer S.M."/>
            <person name="Nierop Groot M.N."/>
            <person name="Kerkhoven R."/>
            <person name="De Vries M."/>
            <person name="Ursing B."/>
            <person name="De Vos W.M."/>
            <person name="Siezen R.J."/>
        </authorList>
    </citation>
    <scope>NUCLEOTIDE SEQUENCE [LARGE SCALE GENOMIC DNA]</scope>
    <source>
        <strain>ATCC BAA-793 / NCIMB 8826 / WCFS1</strain>
    </source>
</reference>
<reference key="2">
    <citation type="journal article" date="2012" name="J. Bacteriol.">
        <title>Complete resequencing and reannotation of the Lactobacillus plantarum WCFS1 genome.</title>
        <authorList>
            <person name="Siezen R.J."/>
            <person name="Francke C."/>
            <person name="Renckens B."/>
            <person name="Boekhorst J."/>
            <person name="Wels M."/>
            <person name="Kleerebezem M."/>
            <person name="van Hijum S.A."/>
        </authorList>
    </citation>
    <scope>NUCLEOTIDE SEQUENCE [LARGE SCALE GENOMIC DNA]</scope>
    <scope>GENOME REANNOTATION</scope>
    <source>
        <strain>ATCC BAA-793 / NCIMB 8826 / WCFS1</strain>
    </source>
</reference>
<sequence length="420" mass="45076">MQAEIIAVGTEILLGQITNTNSTYIARGLAELGIDSYYQTVVGDNRQRLSTVIEIAAQRNDLVILTGGLGPTKDDLTKQTLAHYLNVALVEDQAAMQKITAWFATNDKVMTANNRLQALYPAGAQPLTNHNGMAVGAFYQSENSADFLLLPGPPRELAVMFDSEAKPKLAAAYGEQAQIYSRVMRFYGISESELATRLQPLIDEQQAVTIAPYAKTNEVTLRLSAQAMTETAARGMIDKVDHQIKATVGPYFYGYGDDNSLVTTVINQMIAAKLSITAAESLTAGLFQSTIGSVSGVSAIFPGGFVTYANEAKHQLVNVPQAIIDAEGVVSEATAKAMASGAKQQLNTDVGISFTGVAGPGTLGGQPAGTVWIGLAYRDRPVKAKQYHFAGNRQQIRERSVMAGLDLLRHALNEDTDLKK</sequence>
<name>CINA_LACPL</name>
<gene>
    <name evidence="1" type="primary">cinA</name>
    <name type="ordered locus">lp_2302</name>
</gene>
<feature type="chain" id="PRO_0000156763" description="Putative competence-damage inducible protein">
    <location>
        <begin position="1"/>
        <end position="420"/>
    </location>
</feature>
<keyword id="KW-1185">Reference proteome</keyword>
<proteinExistence type="inferred from homology"/>
<dbReference type="EMBL" id="AL935263">
    <property type="protein sequence ID" value="CCC79502.1"/>
    <property type="molecule type" value="Genomic_DNA"/>
</dbReference>
<dbReference type="RefSeq" id="WP_011101709.1">
    <property type="nucleotide sequence ID" value="NC_004567.2"/>
</dbReference>
<dbReference type="RefSeq" id="YP_004890016.1">
    <property type="nucleotide sequence ID" value="NC_004567.2"/>
</dbReference>
<dbReference type="SMR" id="Q88UZ3"/>
<dbReference type="STRING" id="220668.lp_2302"/>
<dbReference type="EnsemblBacteria" id="CCC79502">
    <property type="protein sequence ID" value="CCC79502"/>
    <property type="gene ID" value="lp_2302"/>
</dbReference>
<dbReference type="KEGG" id="lpl:lp_2302"/>
<dbReference type="PATRIC" id="fig|220668.9.peg.1946"/>
<dbReference type="eggNOG" id="COG1058">
    <property type="taxonomic scope" value="Bacteria"/>
</dbReference>
<dbReference type="eggNOG" id="COG1546">
    <property type="taxonomic scope" value="Bacteria"/>
</dbReference>
<dbReference type="HOGENOM" id="CLU_030805_9_3_9"/>
<dbReference type="OrthoDB" id="9801454at2"/>
<dbReference type="PhylomeDB" id="Q88UZ3"/>
<dbReference type="Proteomes" id="UP000000432">
    <property type="component" value="Chromosome"/>
</dbReference>
<dbReference type="CDD" id="cd00885">
    <property type="entry name" value="cinA"/>
    <property type="match status" value="1"/>
</dbReference>
<dbReference type="Gene3D" id="3.30.70.2860">
    <property type="match status" value="1"/>
</dbReference>
<dbReference type="Gene3D" id="3.90.950.20">
    <property type="entry name" value="CinA-like"/>
    <property type="match status" value="1"/>
</dbReference>
<dbReference type="Gene3D" id="3.40.980.10">
    <property type="entry name" value="MoaB/Mog-like domain"/>
    <property type="match status" value="1"/>
</dbReference>
<dbReference type="HAMAP" id="MF_00226_B">
    <property type="entry name" value="CinA_B"/>
    <property type="match status" value="1"/>
</dbReference>
<dbReference type="InterPro" id="IPR050101">
    <property type="entry name" value="CinA"/>
</dbReference>
<dbReference type="InterPro" id="IPR036653">
    <property type="entry name" value="CinA-like_C"/>
</dbReference>
<dbReference type="InterPro" id="IPR008136">
    <property type="entry name" value="CinA_C"/>
</dbReference>
<dbReference type="InterPro" id="IPR041424">
    <property type="entry name" value="CinA_KH"/>
</dbReference>
<dbReference type="InterPro" id="IPR008135">
    <property type="entry name" value="Competence-induced_CinA"/>
</dbReference>
<dbReference type="InterPro" id="IPR036425">
    <property type="entry name" value="MoaB/Mog-like_dom_sf"/>
</dbReference>
<dbReference type="InterPro" id="IPR001453">
    <property type="entry name" value="MoaB/Mog_dom"/>
</dbReference>
<dbReference type="NCBIfam" id="TIGR00200">
    <property type="entry name" value="cinA_nterm"/>
    <property type="match status" value="1"/>
</dbReference>
<dbReference type="NCBIfam" id="TIGR00177">
    <property type="entry name" value="molyb_syn"/>
    <property type="match status" value="1"/>
</dbReference>
<dbReference type="NCBIfam" id="TIGR00199">
    <property type="entry name" value="PncC_domain"/>
    <property type="match status" value="1"/>
</dbReference>
<dbReference type="NCBIfam" id="NF001813">
    <property type="entry name" value="PRK00549.1"/>
    <property type="match status" value="1"/>
</dbReference>
<dbReference type="PANTHER" id="PTHR13939">
    <property type="entry name" value="NICOTINAMIDE-NUCLEOTIDE AMIDOHYDROLASE PNCC"/>
    <property type="match status" value="1"/>
</dbReference>
<dbReference type="PANTHER" id="PTHR13939:SF0">
    <property type="entry name" value="NMN AMIDOHYDROLASE-LIKE PROTEIN YFAY"/>
    <property type="match status" value="1"/>
</dbReference>
<dbReference type="Pfam" id="PF02464">
    <property type="entry name" value="CinA"/>
    <property type="match status" value="1"/>
</dbReference>
<dbReference type="Pfam" id="PF18146">
    <property type="entry name" value="CinA_KH"/>
    <property type="match status" value="1"/>
</dbReference>
<dbReference type="Pfam" id="PF00994">
    <property type="entry name" value="MoCF_biosynth"/>
    <property type="match status" value="1"/>
</dbReference>
<dbReference type="PIRSF" id="PIRSF006728">
    <property type="entry name" value="CinA"/>
    <property type="match status" value="1"/>
</dbReference>
<dbReference type="SMART" id="SM00852">
    <property type="entry name" value="MoCF_biosynth"/>
    <property type="match status" value="1"/>
</dbReference>
<dbReference type="SUPFAM" id="SSF142433">
    <property type="entry name" value="CinA-like"/>
    <property type="match status" value="1"/>
</dbReference>
<dbReference type="SUPFAM" id="SSF53218">
    <property type="entry name" value="Molybdenum cofactor biosynthesis proteins"/>
    <property type="match status" value="1"/>
</dbReference>